<proteinExistence type="evidence at protein level"/>
<gene>
    <name type="primary">RPL37A</name>
</gene>
<name>RL37A_CHICK</name>
<sequence>MAKRTKKVGIVGKYGTRYGASLRKMVKKIEISQHAKYTCSFCGKTKMKRKAVGIWHCGSCMKTVAGGAWTYNTTSAVTVKSAIRRLKELKDQ</sequence>
<organism>
    <name type="scientific">Gallus gallus</name>
    <name type="common">Chicken</name>
    <dbReference type="NCBI Taxonomy" id="9031"/>
    <lineage>
        <taxon>Eukaryota</taxon>
        <taxon>Metazoa</taxon>
        <taxon>Chordata</taxon>
        <taxon>Craniata</taxon>
        <taxon>Vertebrata</taxon>
        <taxon>Euteleostomi</taxon>
        <taxon>Archelosauria</taxon>
        <taxon>Archosauria</taxon>
        <taxon>Dinosauria</taxon>
        <taxon>Saurischia</taxon>
        <taxon>Theropoda</taxon>
        <taxon>Coelurosauria</taxon>
        <taxon>Aves</taxon>
        <taxon>Neognathae</taxon>
        <taxon>Galloanserae</taxon>
        <taxon>Galliformes</taxon>
        <taxon>Phasianidae</taxon>
        <taxon>Phasianinae</taxon>
        <taxon>Gallus</taxon>
    </lineage>
</organism>
<feature type="chain" id="PRO_0000139820" description="Large ribosomal subunit protein eL43">
    <location>
        <begin position="1"/>
        <end position="92"/>
    </location>
</feature>
<feature type="zinc finger region" description="C4-type">
    <location>
        <begin position="39"/>
        <end position="60"/>
    </location>
</feature>
<feature type="binding site" evidence="1">
    <location>
        <position position="39"/>
    </location>
    <ligand>
        <name>Zn(2+)</name>
        <dbReference type="ChEBI" id="CHEBI:29105"/>
    </ligand>
</feature>
<feature type="binding site" evidence="1">
    <location>
        <position position="42"/>
    </location>
    <ligand>
        <name>Zn(2+)</name>
        <dbReference type="ChEBI" id="CHEBI:29105"/>
    </ligand>
</feature>
<feature type="binding site" evidence="1">
    <location>
        <position position="57"/>
    </location>
    <ligand>
        <name>Zn(2+)</name>
        <dbReference type="ChEBI" id="CHEBI:29105"/>
    </ligand>
</feature>
<feature type="binding site" evidence="1">
    <location>
        <position position="60"/>
    </location>
    <ligand>
        <name>Zn(2+)</name>
        <dbReference type="ChEBI" id="CHEBI:29105"/>
    </ligand>
</feature>
<evidence type="ECO:0000250" key="1">
    <source>
        <dbReference type="UniProtKB" id="P49166"/>
    </source>
</evidence>
<evidence type="ECO:0000250" key="2">
    <source>
        <dbReference type="UniProtKB" id="P61513"/>
    </source>
</evidence>
<evidence type="ECO:0000305" key="3"/>
<keyword id="KW-0002">3D-structure</keyword>
<keyword id="KW-0963">Cytoplasm</keyword>
<keyword id="KW-0479">Metal-binding</keyword>
<keyword id="KW-1185">Reference proteome</keyword>
<keyword id="KW-0687">Ribonucleoprotein</keyword>
<keyword id="KW-0689">Ribosomal protein</keyword>
<keyword id="KW-0862">Zinc</keyword>
<keyword id="KW-0863">Zinc-finger</keyword>
<comment type="function">
    <text evidence="2">Component of the large ribosomal subunit. The ribosome is a large ribonucleoprotein complex responsible for the synthesis of proteins in the cell.</text>
</comment>
<comment type="subunit">
    <text evidence="2">Component of the large ribosomal subunit.</text>
</comment>
<comment type="subcellular location">
    <subcellularLocation>
        <location evidence="2">Cytoplasm</location>
    </subcellularLocation>
</comment>
<comment type="similarity">
    <text evidence="3">Belongs to the eukaryotic ribosomal protein eL43 family.</text>
</comment>
<accession>P32046</accession>
<protein>
    <recommendedName>
        <fullName evidence="3">Large ribosomal subunit protein eL43</fullName>
    </recommendedName>
    <alternativeName>
        <fullName>60S ribosomal protein L37a</fullName>
    </alternativeName>
</protein>
<dbReference type="EMBL" id="D10731">
    <property type="protein sequence ID" value="BAA01575.1"/>
    <property type="molecule type" value="mRNA"/>
</dbReference>
<dbReference type="EMBL" id="D14167">
    <property type="protein sequence ID" value="BAA03209.1"/>
    <property type="molecule type" value="Genomic_DNA"/>
</dbReference>
<dbReference type="PIR" id="S24170">
    <property type="entry name" value="S24170"/>
</dbReference>
<dbReference type="RefSeq" id="NP_001072961.1">
    <property type="nucleotide sequence ID" value="NM_001079493.3"/>
</dbReference>
<dbReference type="PDB" id="8Q7Z">
    <property type="method" value="EM"/>
    <property type="resolution" value="2.50 A"/>
    <property type="chains" value="Bp=1-92"/>
</dbReference>
<dbReference type="PDB" id="8Q87">
    <property type="method" value="EM"/>
    <property type="resolution" value="2.40 A"/>
    <property type="chains" value="Bp=1-92"/>
</dbReference>
<dbReference type="PDBsum" id="8Q7Z"/>
<dbReference type="PDBsum" id="8Q87"/>
<dbReference type="SMR" id="P32046"/>
<dbReference type="FunCoup" id="P32046">
    <property type="interactions" value="1647"/>
</dbReference>
<dbReference type="PaxDb" id="9031-ENSGALP00000018679"/>
<dbReference type="GeneID" id="769981"/>
<dbReference type="KEGG" id="gga:769981"/>
<dbReference type="CTD" id="6168"/>
<dbReference type="VEuPathDB" id="HostDB:geneid_769981"/>
<dbReference type="eggNOG" id="KOG0402">
    <property type="taxonomic scope" value="Eukaryota"/>
</dbReference>
<dbReference type="HOGENOM" id="CLU_141199_1_0_1"/>
<dbReference type="InParanoid" id="P32046"/>
<dbReference type="OMA" id="GPRYGRK"/>
<dbReference type="OrthoDB" id="10258345at2759"/>
<dbReference type="PhylomeDB" id="P32046"/>
<dbReference type="PRO" id="PR:P32046"/>
<dbReference type="Proteomes" id="UP000000539">
    <property type="component" value="Chromosome 7"/>
</dbReference>
<dbReference type="Bgee" id="ENSGALG00000011475">
    <property type="expression patterns" value="Expressed in spleen and 13 other cell types or tissues"/>
</dbReference>
<dbReference type="GO" id="GO:0022625">
    <property type="term" value="C:cytosolic large ribosomal subunit"/>
    <property type="evidence" value="ECO:0000318"/>
    <property type="project" value="GO_Central"/>
</dbReference>
<dbReference type="GO" id="GO:0003735">
    <property type="term" value="F:structural constituent of ribosome"/>
    <property type="evidence" value="ECO:0007669"/>
    <property type="project" value="InterPro"/>
</dbReference>
<dbReference type="GO" id="GO:0008270">
    <property type="term" value="F:zinc ion binding"/>
    <property type="evidence" value="ECO:0007669"/>
    <property type="project" value="UniProtKB-KW"/>
</dbReference>
<dbReference type="GO" id="GO:0006412">
    <property type="term" value="P:translation"/>
    <property type="evidence" value="ECO:0007669"/>
    <property type="project" value="InterPro"/>
</dbReference>
<dbReference type="FunFam" id="2.20.25.30:FF:000002">
    <property type="entry name" value="60S ribosomal protein L37a"/>
    <property type="match status" value="1"/>
</dbReference>
<dbReference type="Gene3D" id="2.20.25.30">
    <property type="match status" value="1"/>
</dbReference>
<dbReference type="HAMAP" id="MF_00327">
    <property type="entry name" value="Ribosomal_eL43"/>
    <property type="match status" value="1"/>
</dbReference>
<dbReference type="InterPro" id="IPR011331">
    <property type="entry name" value="Ribosomal_eL37/eL43"/>
</dbReference>
<dbReference type="InterPro" id="IPR002674">
    <property type="entry name" value="Ribosomal_eL43"/>
</dbReference>
<dbReference type="InterPro" id="IPR011332">
    <property type="entry name" value="Ribosomal_zn-bd"/>
</dbReference>
<dbReference type="NCBIfam" id="TIGR00280">
    <property type="entry name" value="eL43_euk_arch"/>
    <property type="match status" value="1"/>
</dbReference>
<dbReference type="NCBIfam" id="NF003058">
    <property type="entry name" value="PRK03976.1"/>
    <property type="match status" value="1"/>
</dbReference>
<dbReference type="PANTHER" id="PTHR48188">
    <property type="entry name" value="60S RIBOSOMAL PROTEIN L43"/>
    <property type="match status" value="1"/>
</dbReference>
<dbReference type="PANTHER" id="PTHR48188:SF1">
    <property type="entry name" value="LARGE RIBOSOMAL SUBUNIT PROTEIN EL43-RELATED"/>
    <property type="match status" value="1"/>
</dbReference>
<dbReference type="Pfam" id="PF01780">
    <property type="entry name" value="Ribosomal_L37ae"/>
    <property type="match status" value="1"/>
</dbReference>
<dbReference type="SUPFAM" id="SSF57829">
    <property type="entry name" value="Zn-binding ribosomal proteins"/>
    <property type="match status" value="1"/>
</dbReference>
<reference key="1">
    <citation type="journal article" date="1992" name="Biochim. Biophys. Acta">
        <title>The primary structure of chicken ribosomal protein L37a.</title>
        <authorList>
            <person name="Toku S."/>
            <person name="Tanaka T."/>
        </authorList>
    </citation>
    <scope>NUCLEOTIDE SEQUENCE [MRNA]</scope>
    <source>
        <tissue>Embryo</tissue>
    </source>
</reference>
<reference key="2">
    <citation type="journal article" date="1993" name="Eur. J. Biochem.">
        <title>The structure of the gene encoding chicken ribosomal protein L37a.</title>
        <authorList>
            <person name="Machida M."/>
            <person name="Toku S."/>
            <person name="Kenmochi N."/>
            <person name="Tanaka T."/>
        </authorList>
    </citation>
    <scope>NUCLEOTIDE SEQUENCE [GENOMIC DNA]</scope>
    <source>
        <tissue>Liver</tissue>
    </source>
</reference>